<evidence type="ECO:0000255" key="1">
    <source>
        <dbReference type="HAMAP-Rule" id="MF_00804"/>
    </source>
</evidence>
<reference key="1">
    <citation type="journal article" date="2014" name="Stand. Genomic Sci.">
        <title>Complete genome sequence of Burkholderia phymatum STM815(T), a broad host range and efficient nitrogen-fixing symbiont of Mimosa species.</title>
        <authorList>
            <person name="Moulin L."/>
            <person name="Klonowska A."/>
            <person name="Caroline B."/>
            <person name="Booth K."/>
            <person name="Vriezen J.A."/>
            <person name="Melkonian R."/>
            <person name="James E.K."/>
            <person name="Young J.P."/>
            <person name="Bena G."/>
            <person name="Hauser L."/>
            <person name="Land M."/>
            <person name="Kyrpides N."/>
            <person name="Bruce D."/>
            <person name="Chain P."/>
            <person name="Copeland A."/>
            <person name="Pitluck S."/>
            <person name="Woyke T."/>
            <person name="Lizotte-Waniewski M."/>
            <person name="Bristow J."/>
            <person name="Riley M."/>
        </authorList>
    </citation>
    <scope>NUCLEOTIDE SEQUENCE [LARGE SCALE GENOMIC DNA]</scope>
    <source>
        <strain>DSM 17167 / CIP 108236 / LMG 21445 / STM815</strain>
    </source>
</reference>
<dbReference type="EC" id="1.2.1.8" evidence="1"/>
<dbReference type="EMBL" id="CP001044">
    <property type="protein sequence ID" value="ACC72465.1"/>
    <property type="molecule type" value="Genomic_DNA"/>
</dbReference>
<dbReference type="RefSeq" id="WP_012402638.1">
    <property type="nucleotide sequence ID" value="NC_010623.1"/>
</dbReference>
<dbReference type="SMR" id="B2JS88"/>
<dbReference type="STRING" id="391038.Bphy_3309"/>
<dbReference type="KEGG" id="bph:Bphy_3309"/>
<dbReference type="eggNOG" id="COG1012">
    <property type="taxonomic scope" value="Bacteria"/>
</dbReference>
<dbReference type="HOGENOM" id="CLU_005391_0_0_4"/>
<dbReference type="OrthoDB" id="6187633at2"/>
<dbReference type="UniPathway" id="UPA00529">
    <property type="reaction ID" value="UER00386"/>
</dbReference>
<dbReference type="Proteomes" id="UP000001192">
    <property type="component" value="Chromosome 2"/>
</dbReference>
<dbReference type="GO" id="GO:0008802">
    <property type="term" value="F:betaine-aldehyde dehydrogenase (NAD+) activity"/>
    <property type="evidence" value="ECO:0007669"/>
    <property type="project" value="UniProtKB-UniRule"/>
</dbReference>
<dbReference type="GO" id="GO:0046872">
    <property type="term" value="F:metal ion binding"/>
    <property type="evidence" value="ECO:0007669"/>
    <property type="project" value="UniProtKB-KW"/>
</dbReference>
<dbReference type="GO" id="GO:0019285">
    <property type="term" value="P:glycine betaine biosynthetic process from choline"/>
    <property type="evidence" value="ECO:0007669"/>
    <property type="project" value="UniProtKB-UniRule"/>
</dbReference>
<dbReference type="CDD" id="cd07090">
    <property type="entry name" value="ALDH_F9_TMBADH"/>
    <property type="match status" value="1"/>
</dbReference>
<dbReference type="FunFam" id="3.40.309.10:FF:000014">
    <property type="entry name" value="NAD/NADP-dependent betaine aldehyde dehydrogenase"/>
    <property type="match status" value="1"/>
</dbReference>
<dbReference type="FunFam" id="3.40.605.10:FF:000007">
    <property type="entry name" value="NAD/NADP-dependent betaine aldehyde dehydrogenase"/>
    <property type="match status" value="1"/>
</dbReference>
<dbReference type="Gene3D" id="3.40.605.10">
    <property type="entry name" value="Aldehyde Dehydrogenase, Chain A, domain 1"/>
    <property type="match status" value="1"/>
</dbReference>
<dbReference type="Gene3D" id="3.40.309.10">
    <property type="entry name" value="Aldehyde Dehydrogenase, Chain A, domain 2"/>
    <property type="match status" value="1"/>
</dbReference>
<dbReference type="HAMAP" id="MF_00804">
    <property type="entry name" value="BADH"/>
    <property type="match status" value="1"/>
</dbReference>
<dbReference type="InterPro" id="IPR016161">
    <property type="entry name" value="Ald_DH/histidinol_DH"/>
</dbReference>
<dbReference type="InterPro" id="IPR016163">
    <property type="entry name" value="Ald_DH_C"/>
</dbReference>
<dbReference type="InterPro" id="IPR016160">
    <property type="entry name" value="Ald_DH_CS_CYS"/>
</dbReference>
<dbReference type="InterPro" id="IPR029510">
    <property type="entry name" value="Ald_DH_CS_GLU"/>
</dbReference>
<dbReference type="InterPro" id="IPR016162">
    <property type="entry name" value="Ald_DH_N"/>
</dbReference>
<dbReference type="InterPro" id="IPR015590">
    <property type="entry name" value="Aldehyde_DH_dom"/>
</dbReference>
<dbReference type="InterPro" id="IPR011264">
    <property type="entry name" value="BADH"/>
</dbReference>
<dbReference type="NCBIfam" id="TIGR01804">
    <property type="entry name" value="BADH"/>
    <property type="match status" value="1"/>
</dbReference>
<dbReference type="NCBIfam" id="NF009725">
    <property type="entry name" value="PRK13252.1"/>
    <property type="match status" value="1"/>
</dbReference>
<dbReference type="PANTHER" id="PTHR11699">
    <property type="entry name" value="ALDEHYDE DEHYDROGENASE-RELATED"/>
    <property type="match status" value="1"/>
</dbReference>
<dbReference type="Pfam" id="PF00171">
    <property type="entry name" value="Aldedh"/>
    <property type="match status" value="1"/>
</dbReference>
<dbReference type="SUPFAM" id="SSF53720">
    <property type="entry name" value="ALDH-like"/>
    <property type="match status" value="1"/>
</dbReference>
<dbReference type="PROSITE" id="PS00070">
    <property type="entry name" value="ALDEHYDE_DEHYDR_CYS"/>
    <property type="match status" value="1"/>
</dbReference>
<dbReference type="PROSITE" id="PS00687">
    <property type="entry name" value="ALDEHYDE_DEHYDR_GLU"/>
    <property type="match status" value="1"/>
</dbReference>
<proteinExistence type="inferred from homology"/>
<organism>
    <name type="scientific">Paraburkholderia phymatum (strain DSM 17167 / CIP 108236 / LMG 21445 / STM815)</name>
    <name type="common">Burkholderia phymatum</name>
    <dbReference type="NCBI Taxonomy" id="391038"/>
    <lineage>
        <taxon>Bacteria</taxon>
        <taxon>Pseudomonadati</taxon>
        <taxon>Pseudomonadota</taxon>
        <taxon>Betaproteobacteria</taxon>
        <taxon>Burkholderiales</taxon>
        <taxon>Burkholderiaceae</taxon>
        <taxon>Paraburkholderia</taxon>
    </lineage>
</organism>
<accession>B2JS88</accession>
<name>BETB_PARP8</name>
<comment type="function">
    <text evidence="1">Involved in the biosynthesis of the osmoprotectant glycine betaine. Catalyzes the irreversible oxidation of betaine aldehyde to the corresponding acid.</text>
</comment>
<comment type="catalytic activity">
    <reaction evidence="1">
        <text>betaine aldehyde + NAD(+) + H2O = glycine betaine + NADH + 2 H(+)</text>
        <dbReference type="Rhea" id="RHEA:15305"/>
        <dbReference type="ChEBI" id="CHEBI:15377"/>
        <dbReference type="ChEBI" id="CHEBI:15378"/>
        <dbReference type="ChEBI" id="CHEBI:15710"/>
        <dbReference type="ChEBI" id="CHEBI:17750"/>
        <dbReference type="ChEBI" id="CHEBI:57540"/>
        <dbReference type="ChEBI" id="CHEBI:57945"/>
        <dbReference type="EC" id="1.2.1.8"/>
    </reaction>
    <physiologicalReaction direction="left-to-right" evidence="1">
        <dbReference type="Rhea" id="RHEA:15306"/>
    </physiologicalReaction>
</comment>
<comment type="cofactor">
    <cofactor evidence="1">
        <name>K(+)</name>
        <dbReference type="ChEBI" id="CHEBI:29103"/>
    </cofactor>
    <text evidence="1">Binds 2 potassium ions per subunit.</text>
</comment>
<comment type="pathway">
    <text evidence="1">Amine and polyamine biosynthesis; betaine biosynthesis via choline pathway; betaine from betaine aldehyde: step 1/1.</text>
</comment>
<comment type="subunit">
    <text evidence="1">Dimer of dimers.</text>
</comment>
<comment type="similarity">
    <text evidence="1">Belongs to the aldehyde dehydrogenase family.</text>
</comment>
<sequence length="489" mass="52647">MSAYGLQRLYIGGDYVDATSGVTFDTFDPATGELLATVQQASEADIERAVQSAREGQRAWAAMTAMQRSRILRRAVDLLRERNDELAELEMRDTGKPIAETRAVDIVTGADVIEYYAGLATAIEGQQIPLRAESFVYTRREPLGVTAGIGAWNYPIQIACWKSAPALAAGNAMIFKPSEVTPLSASKLAEIYLEAGVPAGVFNVVQGDGRVGAMLSAHPGIAKISFTGGVETGKKVMSMAGGSSLKEVTMELGGKSPLVVFEDADLDRAADIAVTANFFSAGQVCTNGTRVFVHQSVQPAFEARVIERVKRIRVGKPSDPSTNFGPLASAAQLDKVLGFIESGKREGARLVAGGARIVEGDYARGQYVQPTVFSDCRDDMKIVREEIFGPVMSILSFVDEDDVIERANDTIYGLAAGVVTENLARAHRAIHRLEAGICWINTWGESPAEMPVGGYKQSGVGRENGITTLEHYTRIKSVQVELGKYQPVF</sequence>
<gene>
    <name evidence="1" type="primary">betB</name>
    <name type="ordered locus">Bphy_3309</name>
</gene>
<keyword id="KW-0479">Metal-binding</keyword>
<keyword id="KW-0520">NAD</keyword>
<keyword id="KW-0521">NADP</keyword>
<keyword id="KW-0558">Oxidation</keyword>
<keyword id="KW-0560">Oxidoreductase</keyword>
<keyword id="KW-0630">Potassium</keyword>
<keyword id="KW-1185">Reference proteome</keyword>
<feature type="chain" id="PRO_1000133944" description="Betaine aldehyde dehydrogenase">
    <location>
        <begin position="1"/>
        <end position="489"/>
    </location>
</feature>
<feature type="active site" description="Charge relay system" evidence="1">
    <location>
        <position position="162"/>
    </location>
</feature>
<feature type="active site" description="Proton acceptor" evidence="1">
    <location>
        <position position="251"/>
    </location>
</feature>
<feature type="active site" description="Nucleophile" evidence="1">
    <location>
        <position position="285"/>
    </location>
</feature>
<feature type="active site" description="Charge relay system" evidence="1">
    <location>
        <position position="463"/>
    </location>
</feature>
<feature type="binding site" evidence="1">
    <location>
        <position position="26"/>
    </location>
    <ligand>
        <name>K(+)</name>
        <dbReference type="ChEBI" id="CHEBI:29103"/>
        <label>1</label>
    </ligand>
</feature>
<feature type="binding site" evidence="1">
    <location>
        <position position="93"/>
    </location>
    <ligand>
        <name>K(+)</name>
        <dbReference type="ChEBI" id="CHEBI:29103"/>
        <label>1</label>
    </ligand>
</feature>
<feature type="binding site" evidence="1">
    <location>
        <begin position="150"/>
        <end position="152"/>
    </location>
    <ligand>
        <name>NAD(+)</name>
        <dbReference type="ChEBI" id="CHEBI:57540"/>
    </ligand>
</feature>
<feature type="binding site" evidence="1">
    <location>
        <begin position="176"/>
        <end position="179"/>
    </location>
    <ligand>
        <name>NAD(+)</name>
        <dbReference type="ChEBI" id="CHEBI:57540"/>
    </ligand>
</feature>
<feature type="binding site" evidence="1">
    <location>
        <position position="180"/>
    </location>
    <ligand>
        <name>K(+)</name>
        <dbReference type="ChEBI" id="CHEBI:29103"/>
        <label>1</label>
    </ligand>
</feature>
<feature type="binding site" evidence="1">
    <location>
        <begin position="229"/>
        <end position="232"/>
    </location>
    <ligand>
        <name>NAD(+)</name>
        <dbReference type="ChEBI" id="CHEBI:57540"/>
    </ligand>
</feature>
<feature type="binding site" evidence="1">
    <location>
        <position position="245"/>
    </location>
    <ligand>
        <name>K(+)</name>
        <dbReference type="ChEBI" id="CHEBI:29103"/>
        <label>2</label>
    </ligand>
</feature>
<feature type="binding site" evidence="1">
    <location>
        <position position="253"/>
    </location>
    <ligand>
        <name>NAD(+)</name>
        <dbReference type="ChEBI" id="CHEBI:57540"/>
    </ligand>
</feature>
<feature type="binding site" description="covalent" evidence="1">
    <location>
        <position position="285"/>
    </location>
    <ligand>
        <name>NAD(+)</name>
        <dbReference type="ChEBI" id="CHEBI:57540"/>
    </ligand>
</feature>
<feature type="binding site" evidence="1">
    <location>
        <position position="386"/>
    </location>
    <ligand>
        <name>NAD(+)</name>
        <dbReference type="ChEBI" id="CHEBI:57540"/>
    </ligand>
</feature>
<feature type="binding site" evidence="1">
    <location>
        <position position="456"/>
    </location>
    <ligand>
        <name>K(+)</name>
        <dbReference type="ChEBI" id="CHEBI:29103"/>
        <label>2</label>
    </ligand>
</feature>
<feature type="binding site" evidence="1">
    <location>
        <position position="459"/>
    </location>
    <ligand>
        <name>K(+)</name>
        <dbReference type="ChEBI" id="CHEBI:29103"/>
        <label>2</label>
    </ligand>
</feature>
<feature type="site" description="Seems to be a necessary countercharge to the potassium cations" evidence="1">
    <location>
        <position position="247"/>
    </location>
</feature>
<feature type="modified residue" description="Cysteine sulfenic acid (-SOH)" evidence="1">
    <location>
        <position position="285"/>
    </location>
</feature>
<protein>
    <recommendedName>
        <fullName evidence="1">Betaine aldehyde dehydrogenase</fullName>
        <shortName evidence="1">BADH</shortName>
        <ecNumber evidence="1">1.2.1.8</ecNumber>
    </recommendedName>
</protein>